<gene>
    <name evidence="1" type="primary">rbcL</name>
</gene>
<accession>Q31669</accession>
<keyword id="KW-0113">Calvin cycle</keyword>
<keyword id="KW-0120">Carbon dioxide fixation</keyword>
<keyword id="KW-0150">Chloroplast</keyword>
<keyword id="KW-1015">Disulfide bond</keyword>
<keyword id="KW-0456">Lyase</keyword>
<keyword id="KW-0460">Magnesium</keyword>
<keyword id="KW-0479">Metal-binding</keyword>
<keyword id="KW-0488">Methylation</keyword>
<keyword id="KW-0503">Monooxygenase</keyword>
<keyword id="KW-0560">Oxidoreductase</keyword>
<keyword id="KW-0601">Photorespiration</keyword>
<keyword id="KW-0602">Photosynthesis</keyword>
<keyword id="KW-0934">Plastid</keyword>
<reference key="1">
    <citation type="journal article" date="1995" name="Ann. Mo. Bot. Gard.">
        <title>Subfamilial and tribal relationships in the Rubiaceae based on rbcL sequence data.</title>
        <authorList>
            <person name="Bremer B."/>
            <person name="Andreasen K."/>
            <person name="Olsson D."/>
        </authorList>
    </citation>
    <scope>NUCLEOTIDE SEQUENCE [GENOMIC DNA]</scope>
</reference>
<proteinExistence type="inferred from homology"/>
<feature type="chain" id="PRO_0000062352" description="Ribulose bisphosphate carboxylase large chain">
    <location>
        <begin position="1" status="less than"/>
        <end position="468"/>
    </location>
</feature>
<feature type="active site" description="Proton acceptor" evidence="1">
    <location>
        <position position="166"/>
    </location>
</feature>
<feature type="active site" description="Proton acceptor" evidence="1">
    <location>
        <position position="285"/>
    </location>
</feature>
<feature type="binding site" description="in homodimeric partner" evidence="1">
    <location>
        <position position="114"/>
    </location>
    <ligand>
        <name>substrate</name>
    </ligand>
</feature>
<feature type="binding site" evidence="1">
    <location>
        <position position="164"/>
    </location>
    <ligand>
        <name>substrate</name>
    </ligand>
</feature>
<feature type="binding site" evidence="1">
    <location>
        <position position="168"/>
    </location>
    <ligand>
        <name>substrate</name>
    </ligand>
</feature>
<feature type="binding site" description="via carbamate group" evidence="1">
    <location>
        <position position="192"/>
    </location>
    <ligand>
        <name>Mg(2+)</name>
        <dbReference type="ChEBI" id="CHEBI:18420"/>
    </ligand>
</feature>
<feature type="binding site" evidence="1">
    <location>
        <position position="194"/>
    </location>
    <ligand>
        <name>Mg(2+)</name>
        <dbReference type="ChEBI" id="CHEBI:18420"/>
    </ligand>
</feature>
<feature type="binding site" evidence="1">
    <location>
        <position position="195"/>
    </location>
    <ligand>
        <name>Mg(2+)</name>
        <dbReference type="ChEBI" id="CHEBI:18420"/>
    </ligand>
</feature>
<feature type="binding site" evidence="1">
    <location>
        <position position="286"/>
    </location>
    <ligand>
        <name>substrate</name>
    </ligand>
</feature>
<feature type="binding site" evidence="1">
    <location>
        <position position="318"/>
    </location>
    <ligand>
        <name>substrate</name>
    </ligand>
</feature>
<feature type="binding site" evidence="1">
    <location>
        <position position="370"/>
    </location>
    <ligand>
        <name>substrate</name>
    </ligand>
</feature>
<feature type="site" description="Transition state stabilizer" evidence="1">
    <location>
        <position position="325"/>
    </location>
</feature>
<feature type="modified residue" description="N6,N6,N6-trimethyllysine" evidence="1">
    <location>
        <position position="5"/>
    </location>
</feature>
<feature type="modified residue" description="N6-carboxylysine" evidence="1">
    <location>
        <position position="192"/>
    </location>
</feature>
<feature type="disulfide bond" description="Interchain; in linked form" evidence="1">
    <location>
        <position position="238"/>
    </location>
</feature>
<feature type="non-terminal residue">
    <location>
        <position position="1"/>
    </location>
</feature>
<geneLocation type="chloroplast"/>
<sequence>SVGFKAGVKEYKLTYYTPEYETKETDILAAFRVTPQPGVPPEEAGAAVAAESSTGTWTTVWTDGLTSLDRYKGRCYHIEPVAGEEDQYIAYVAYPLDLFEEGSVTNMFTSIVGNVFGFKALRALRLEDLRIPISYVKTFQGPPHGIQVERDKLNKYGRPLLGCTIKPKLGLSAKNYGRAVYECLRGGLDFTKDDENVNSQPFMRWRDRFLFCAEAIFKSQAETGEIKGHYLNATAGTCEEMMKRAIFARELGVPIVMHDYLTGGFTANTSLAHYCRDNGLLLHIHRAMHAXIDRQKNHGIHFRVLAKALRMSGGDHIHSGTVVGKLEGERDITLGFVDLLRDDYIEKDRARGIYFTQDWVSLPGVLPVASGGIHVWHMPALTEIFGDDSVLQFGGGTLGHPWGNAPGAVANRVALEACVKXRNEGRDLATEGNEIIREATKWSPELAAACEVWKEITXNFAAVDTLDP</sequence>
<comment type="function">
    <text evidence="1">RuBisCO catalyzes two reactions: the carboxylation of D-ribulose 1,5-bisphosphate, the primary event in carbon dioxide fixation, as well as the oxidative fragmentation of the pentose substrate in the photorespiration process. Both reactions occur simultaneously and in competition at the same active site.</text>
</comment>
<comment type="catalytic activity">
    <reaction evidence="1">
        <text>2 (2R)-3-phosphoglycerate + 2 H(+) = D-ribulose 1,5-bisphosphate + CO2 + H2O</text>
        <dbReference type="Rhea" id="RHEA:23124"/>
        <dbReference type="ChEBI" id="CHEBI:15377"/>
        <dbReference type="ChEBI" id="CHEBI:15378"/>
        <dbReference type="ChEBI" id="CHEBI:16526"/>
        <dbReference type="ChEBI" id="CHEBI:57870"/>
        <dbReference type="ChEBI" id="CHEBI:58272"/>
        <dbReference type="EC" id="4.1.1.39"/>
    </reaction>
</comment>
<comment type="catalytic activity">
    <reaction evidence="1">
        <text>D-ribulose 1,5-bisphosphate + O2 = 2-phosphoglycolate + (2R)-3-phosphoglycerate + 2 H(+)</text>
        <dbReference type="Rhea" id="RHEA:36631"/>
        <dbReference type="ChEBI" id="CHEBI:15378"/>
        <dbReference type="ChEBI" id="CHEBI:15379"/>
        <dbReference type="ChEBI" id="CHEBI:57870"/>
        <dbReference type="ChEBI" id="CHEBI:58033"/>
        <dbReference type="ChEBI" id="CHEBI:58272"/>
    </reaction>
</comment>
<comment type="cofactor">
    <cofactor evidence="1">
        <name>Mg(2+)</name>
        <dbReference type="ChEBI" id="CHEBI:18420"/>
    </cofactor>
    <text evidence="1">Binds 1 Mg(2+) ion per subunit.</text>
</comment>
<comment type="subunit">
    <text evidence="1">Heterohexadecamer of 8 large chains and 8 small chains; disulfide-linked. The disulfide link is formed within the large subunit homodimers.</text>
</comment>
<comment type="subcellular location">
    <subcellularLocation>
        <location>Plastid</location>
        <location>Chloroplast</location>
    </subcellularLocation>
</comment>
<comment type="PTM">
    <text evidence="1">The disulfide bond which can form in the large chain dimeric partners within the hexadecamer appears to be associated with oxidative stress and protein turnover.</text>
</comment>
<comment type="miscellaneous">
    <text evidence="1">The basic functional RuBisCO is composed of a large chain homodimer in a 'head-to-tail' conformation. In form I RuBisCO this homodimer is arranged in a barrel-like tetramer with the small subunits forming a tetrameric 'cap' on each end of the 'barrel'.</text>
</comment>
<comment type="similarity">
    <text evidence="1">Belongs to the RuBisCO large chain family. Type I subfamily.</text>
</comment>
<name>RBL_ANTHE</name>
<protein>
    <recommendedName>
        <fullName evidence="1">Ribulose bisphosphate carboxylase large chain</fullName>
        <shortName evidence="1">RuBisCO large subunit</shortName>
        <ecNumber evidence="1">4.1.1.39</ecNumber>
    </recommendedName>
</protein>
<dbReference type="EC" id="4.1.1.39" evidence="1"/>
<dbReference type="EMBL" id="X83623">
    <property type="protein sequence ID" value="CAA58602.1"/>
    <property type="molecule type" value="Genomic_DNA"/>
</dbReference>
<dbReference type="GO" id="GO:0009507">
    <property type="term" value="C:chloroplast"/>
    <property type="evidence" value="ECO:0007669"/>
    <property type="project" value="UniProtKB-SubCell"/>
</dbReference>
<dbReference type="GO" id="GO:0000287">
    <property type="term" value="F:magnesium ion binding"/>
    <property type="evidence" value="ECO:0007669"/>
    <property type="project" value="InterPro"/>
</dbReference>
<dbReference type="GO" id="GO:0004497">
    <property type="term" value="F:monooxygenase activity"/>
    <property type="evidence" value="ECO:0007669"/>
    <property type="project" value="UniProtKB-KW"/>
</dbReference>
<dbReference type="GO" id="GO:0016984">
    <property type="term" value="F:ribulose-bisphosphate carboxylase activity"/>
    <property type="evidence" value="ECO:0007669"/>
    <property type="project" value="UniProtKB-EC"/>
</dbReference>
<dbReference type="GO" id="GO:0009853">
    <property type="term" value="P:photorespiration"/>
    <property type="evidence" value="ECO:0007669"/>
    <property type="project" value="UniProtKB-KW"/>
</dbReference>
<dbReference type="GO" id="GO:0019253">
    <property type="term" value="P:reductive pentose-phosphate cycle"/>
    <property type="evidence" value="ECO:0007669"/>
    <property type="project" value="UniProtKB-KW"/>
</dbReference>
<dbReference type="CDD" id="cd08212">
    <property type="entry name" value="RuBisCO_large_I"/>
    <property type="match status" value="1"/>
</dbReference>
<dbReference type="FunFam" id="3.20.20.110:FF:000001">
    <property type="entry name" value="Ribulose bisphosphate carboxylase large chain"/>
    <property type="match status" value="1"/>
</dbReference>
<dbReference type="FunFam" id="3.30.70.150:FF:000001">
    <property type="entry name" value="Ribulose bisphosphate carboxylase large chain"/>
    <property type="match status" value="1"/>
</dbReference>
<dbReference type="Gene3D" id="3.20.20.110">
    <property type="entry name" value="Ribulose bisphosphate carboxylase, large subunit, C-terminal domain"/>
    <property type="match status" value="1"/>
</dbReference>
<dbReference type="Gene3D" id="3.30.70.150">
    <property type="entry name" value="RuBisCO large subunit, N-terminal domain"/>
    <property type="match status" value="1"/>
</dbReference>
<dbReference type="HAMAP" id="MF_01338">
    <property type="entry name" value="RuBisCO_L_type1"/>
    <property type="match status" value="1"/>
</dbReference>
<dbReference type="InterPro" id="IPR033966">
    <property type="entry name" value="RuBisCO"/>
</dbReference>
<dbReference type="InterPro" id="IPR020878">
    <property type="entry name" value="RuBisCo_large_chain_AS"/>
</dbReference>
<dbReference type="InterPro" id="IPR000685">
    <property type="entry name" value="RuBisCO_lsu_C"/>
</dbReference>
<dbReference type="InterPro" id="IPR036376">
    <property type="entry name" value="RuBisCO_lsu_C_sf"/>
</dbReference>
<dbReference type="InterPro" id="IPR017443">
    <property type="entry name" value="RuBisCO_lsu_fd_N"/>
</dbReference>
<dbReference type="InterPro" id="IPR036422">
    <property type="entry name" value="RuBisCO_lsu_N_sf"/>
</dbReference>
<dbReference type="InterPro" id="IPR020888">
    <property type="entry name" value="RuBisCO_lsuI"/>
</dbReference>
<dbReference type="NCBIfam" id="NF003252">
    <property type="entry name" value="PRK04208.1"/>
    <property type="match status" value="1"/>
</dbReference>
<dbReference type="PANTHER" id="PTHR42704">
    <property type="entry name" value="RIBULOSE BISPHOSPHATE CARBOXYLASE"/>
    <property type="match status" value="1"/>
</dbReference>
<dbReference type="PANTHER" id="PTHR42704:SF15">
    <property type="entry name" value="RIBULOSE BISPHOSPHATE CARBOXYLASE LARGE CHAIN"/>
    <property type="match status" value="1"/>
</dbReference>
<dbReference type="Pfam" id="PF00016">
    <property type="entry name" value="RuBisCO_large"/>
    <property type="match status" value="1"/>
</dbReference>
<dbReference type="Pfam" id="PF02788">
    <property type="entry name" value="RuBisCO_large_N"/>
    <property type="match status" value="1"/>
</dbReference>
<dbReference type="SFLD" id="SFLDG01052">
    <property type="entry name" value="RuBisCO"/>
    <property type="match status" value="1"/>
</dbReference>
<dbReference type="SFLD" id="SFLDS00014">
    <property type="entry name" value="RuBisCO"/>
    <property type="match status" value="1"/>
</dbReference>
<dbReference type="SFLD" id="SFLDG00301">
    <property type="entry name" value="RuBisCO-like_proteins"/>
    <property type="match status" value="1"/>
</dbReference>
<dbReference type="SUPFAM" id="SSF51649">
    <property type="entry name" value="RuBisCo, C-terminal domain"/>
    <property type="match status" value="1"/>
</dbReference>
<dbReference type="SUPFAM" id="SSF54966">
    <property type="entry name" value="RuBisCO, large subunit, small (N-terminal) domain"/>
    <property type="match status" value="1"/>
</dbReference>
<dbReference type="PROSITE" id="PS00157">
    <property type="entry name" value="RUBISCO_LARGE"/>
    <property type="match status" value="1"/>
</dbReference>
<evidence type="ECO:0000255" key="1">
    <source>
        <dbReference type="HAMAP-Rule" id="MF_01338"/>
    </source>
</evidence>
<organism>
    <name type="scientific">Anthospermum herbaceum</name>
    <dbReference type="NCBI Taxonomy" id="43444"/>
    <lineage>
        <taxon>Eukaryota</taxon>
        <taxon>Viridiplantae</taxon>
        <taxon>Streptophyta</taxon>
        <taxon>Embryophyta</taxon>
        <taxon>Tracheophyta</taxon>
        <taxon>Spermatophyta</taxon>
        <taxon>Magnoliopsida</taxon>
        <taxon>eudicotyledons</taxon>
        <taxon>Gunneridae</taxon>
        <taxon>Pentapetalae</taxon>
        <taxon>asterids</taxon>
        <taxon>lamiids</taxon>
        <taxon>Gentianales</taxon>
        <taxon>Rubiaceae</taxon>
        <taxon>Rubioideae</taxon>
        <taxon>Anthospermeae</taxon>
        <taxon>Anthospermum</taxon>
    </lineage>
</organism>